<reference key="1">
    <citation type="submission" date="1999-04" db="EMBL/GenBank/DDBJ databases">
        <title>Evolutionary analysis of plastidic maturase K and nuclear chalcone synthase and their utility for phylogenetic reconstructions within the Brassicaceae.</title>
        <authorList>
            <person name="Koch M."/>
            <person name="Mitchell-Olds T."/>
        </authorList>
    </citation>
    <scope>NUCLEOTIDE SEQUENCE [GENOMIC DNA]</scope>
</reference>
<comment type="function">
    <text evidence="1">Usually encoded in the trnK tRNA gene intron. Probably assists in splicing its own and other chloroplast group II introns.</text>
</comment>
<comment type="subcellular location">
    <subcellularLocation>
        <location>Plastid</location>
        <location>Chloroplast</location>
    </subcellularLocation>
</comment>
<comment type="similarity">
    <text evidence="1">Belongs to the intron maturase 2 family. MatK subfamily.</text>
</comment>
<evidence type="ECO:0000255" key="1">
    <source>
        <dbReference type="HAMAP-Rule" id="MF_01390"/>
    </source>
</evidence>
<keyword id="KW-0150">Chloroplast</keyword>
<keyword id="KW-0507">mRNA processing</keyword>
<keyword id="KW-0934">Plastid</keyword>
<keyword id="KW-0694">RNA-binding</keyword>
<keyword id="KW-0819">tRNA processing</keyword>
<dbReference type="EMBL" id="AF144337">
    <property type="protein sequence ID" value="AAG43306.1"/>
    <property type="molecule type" value="Genomic_DNA"/>
</dbReference>
<dbReference type="GO" id="GO:0009507">
    <property type="term" value="C:chloroplast"/>
    <property type="evidence" value="ECO:0007669"/>
    <property type="project" value="UniProtKB-SubCell"/>
</dbReference>
<dbReference type="GO" id="GO:0003723">
    <property type="term" value="F:RNA binding"/>
    <property type="evidence" value="ECO:0007669"/>
    <property type="project" value="UniProtKB-KW"/>
</dbReference>
<dbReference type="GO" id="GO:0006397">
    <property type="term" value="P:mRNA processing"/>
    <property type="evidence" value="ECO:0007669"/>
    <property type="project" value="UniProtKB-KW"/>
</dbReference>
<dbReference type="GO" id="GO:0008380">
    <property type="term" value="P:RNA splicing"/>
    <property type="evidence" value="ECO:0007669"/>
    <property type="project" value="UniProtKB-UniRule"/>
</dbReference>
<dbReference type="GO" id="GO:0008033">
    <property type="term" value="P:tRNA processing"/>
    <property type="evidence" value="ECO:0007669"/>
    <property type="project" value="UniProtKB-KW"/>
</dbReference>
<dbReference type="HAMAP" id="MF_01390">
    <property type="entry name" value="MatK"/>
    <property type="match status" value="1"/>
</dbReference>
<dbReference type="InterPro" id="IPR024937">
    <property type="entry name" value="Domain_X"/>
</dbReference>
<dbReference type="InterPro" id="IPR002866">
    <property type="entry name" value="Maturase_MatK"/>
</dbReference>
<dbReference type="InterPro" id="IPR024942">
    <property type="entry name" value="Maturase_MatK_N"/>
</dbReference>
<dbReference type="PANTHER" id="PTHR34811">
    <property type="entry name" value="MATURASE K"/>
    <property type="match status" value="1"/>
</dbReference>
<dbReference type="PANTHER" id="PTHR34811:SF1">
    <property type="entry name" value="MATURASE K"/>
    <property type="match status" value="1"/>
</dbReference>
<dbReference type="Pfam" id="PF01348">
    <property type="entry name" value="Intron_maturas2"/>
    <property type="match status" value="1"/>
</dbReference>
<dbReference type="Pfam" id="PF01824">
    <property type="entry name" value="MatK_N"/>
    <property type="match status" value="1"/>
</dbReference>
<proteinExistence type="inferred from homology"/>
<accession>Q9GF55</accession>
<organism>
    <name type="scientific">Cardamine amara</name>
    <name type="common">Large bitter-cress</name>
    <dbReference type="NCBI Taxonomy" id="50461"/>
    <lineage>
        <taxon>Eukaryota</taxon>
        <taxon>Viridiplantae</taxon>
        <taxon>Streptophyta</taxon>
        <taxon>Embryophyta</taxon>
        <taxon>Tracheophyta</taxon>
        <taxon>Spermatophyta</taxon>
        <taxon>Magnoliopsida</taxon>
        <taxon>eudicotyledons</taxon>
        <taxon>Gunneridae</taxon>
        <taxon>Pentapetalae</taxon>
        <taxon>rosids</taxon>
        <taxon>malvids</taxon>
        <taxon>Brassicales</taxon>
        <taxon>Brassicaceae</taxon>
        <taxon>Cardamineae</taxon>
        <taxon>Cardamine</taxon>
    </lineage>
</organism>
<sequence length="504" mass="60333">MEKFQGYLEFDGARQQSFLYPLFFREYIYVLAYDHGLNRLNRNRSIFLENADYDKKYSSLIVKRLILRMYEQNRLIIPTKDLNQNNFLGHTSLFYYQMISVLFAVIVEIPFSLRLGSSFEGNLFKKSYNLQSIHSIFPFLEDKLSHFNYVLDVVIPYPIHLEILVQTLRYRVKDASSLHFLRFCVYEYFNCKNFYIKKKSILNPRFFLFLYNSHVCEYESIFFFLRKRSSHLRSTSYEVLFERIFFYGKIQHFFKVFVNNFPAILGLLKDPFIHYVRYHGRSILATKDTPLLMNKWKYYFVNLWQCYFSVWFQSQKVHIKQLSKDNLEFLGYLSSLRLNPLVVRSQMLENSFLIDNVRIKLDSKIPISSIIGSLAKDKFCNVLGHPISKVIWTHSSDSDILNRFVRICRNISHYYSGSSKKKFLYRIKYILRLCCVKTLARKHKSTVRAFLKRLGSGLLEEFLTGEDQVLSLIFPISYYASKRLYRVRIWYLDILYLNDLANHE</sequence>
<gene>
    <name evidence="1" type="primary">matK</name>
</gene>
<name>MATK_CARAN</name>
<protein>
    <recommendedName>
        <fullName evidence="1">Maturase K</fullName>
    </recommendedName>
    <alternativeName>
        <fullName evidence="1">Intron maturase</fullName>
    </alternativeName>
</protein>
<geneLocation type="chloroplast"/>
<feature type="chain" id="PRO_0000143310" description="Maturase K">
    <location>
        <begin position="1"/>
        <end position="504"/>
    </location>
</feature>